<keyword id="KW-0113">Calvin cycle</keyword>
<keyword id="KW-0120">Carbon dioxide fixation</keyword>
<keyword id="KW-0150">Chloroplast</keyword>
<keyword id="KW-1015">Disulfide bond</keyword>
<keyword id="KW-0456">Lyase</keyword>
<keyword id="KW-0460">Magnesium</keyword>
<keyword id="KW-0479">Metal-binding</keyword>
<keyword id="KW-0488">Methylation</keyword>
<keyword id="KW-0503">Monooxygenase</keyword>
<keyword id="KW-0560">Oxidoreductase</keyword>
<keyword id="KW-0601">Photorespiration</keyword>
<keyword id="KW-0602">Photosynthesis</keyword>
<keyword id="KW-0934">Plastid</keyword>
<evidence type="ECO:0000255" key="1">
    <source>
        <dbReference type="HAMAP-Rule" id="MF_01338"/>
    </source>
</evidence>
<geneLocation type="chloroplast"/>
<reference key="1">
    <citation type="journal article" date="1995" name="Ann. Mo. Bot. Gard.">
        <title>A comparision of angiosperm phylogenies from nuclear 18S rRNA and rbcL sequences.</title>
        <authorList>
            <person name="Nickrent D.L."/>
            <person name="Soltis D.E."/>
        </authorList>
    </citation>
    <scope>NUCLEOTIDE SEQUENCE [GENOMIC DNA]</scope>
</reference>
<comment type="function">
    <text evidence="1">RuBisCO catalyzes two reactions: the carboxylation of D-ribulose 1,5-bisphosphate, the primary event in carbon dioxide fixation, as well as the oxidative fragmentation of the pentose substrate in the photorespiration process. Both reactions occur simultaneously and in competition at the same active site.</text>
</comment>
<comment type="catalytic activity">
    <reaction evidence="1">
        <text>2 (2R)-3-phosphoglycerate + 2 H(+) = D-ribulose 1,5-bisphosphate + CO2 + H2O</text>
        <dbReference type="Rhea" id="RHEA:23124"/>
        <dbReference type="ChEBI" id="CHEBI:15377"/>
        <dbReference type="ChEBI" id="CHEBI:15378"/>
        <dbReference type="ChEBI" id="CHEBI:16526"/>
        <dbReference type="ChEBI" id="CHEBI:57870"/>
        <dbReference type="ChEBI" id="CHEBI:58272"/>
        <dbReference type="EC" id="4.1.1.39"/>
    </reaction>
</comment>
<comment type="catalytic activity">
    <reaction evidence="1">
        <text>D-ribulose 1,5-bisphosphate + O2 = 2-phosphoglycolate + (2R)-3-phosphoglycerate + 2 H(+)</text>
        <dbReference type="Rhea" id="RHEA:36631"/>
        <dbReference type="ChEBI" id="CHEBI:15378"/>
        <dbReference type="ChEBI" id="CHEBI:15379"/>
        <dbReference type="ChEBI" id="CHEBI:57870"/>
        <dbReference type="ChEBI" id="CHEBI:58033"/>
        <dbReference type="ChEBI" id="CHEBI:58272"/>
    </reaction>
</comment>
<comment type="cofactor">
    <cofactor evidence="1">
        <name>Mg(2+)</name>
        <dbReference type="ChEBI" id="CHEBI:18420"/>
    </cofactor>
    <text evidence="1">Binds 1 Mg(2+) ion per subunit.</text>
</comment>
<comment type="subunit">
    <text evidence="1">Heterohexadecamer of 8 large chains and 8 small chains; disulfide-linked. The disulfide link is formed within the large subunit homodimers.</text>
</comment>
<comment type="subcellular location">
    <subcellularLocation>
        <location>Plastid</location>
        <location>Chloroplast</location>
    </subcellularLocation>
</comment>
<comment type="PTM">
    <text evidence="1">The disulfide bond which can form in the large chain dimeric partners within the hexadecamer appears to be associated with oxidative stress and protein turnover.</text>
</comment>
<comment type="miscellaneous">
    <text evidence="1">The basic functional RuBisCO is composed of a large chain homodimer in a 'head-to-tail' conformation. In form I RuBisCO this homodimer is arranged in a barrel-like tetramer with the small subunits forming a tetrameric 'cap' on each end of the 'barrel'.</text>
</comment>
<comment type="similarity">
    <text evidence="1">Belongs to the RuBisCO large chain family. Type I subfamily.</text>
</comment>
<feature type="chain" id="PRO_0000062439" description="Ribulose bisphosphate carboxylase large chain">
    <location>
        <begin position="1" status="less than"/>
        <end position="474"/>
    </location>
</feature>
<feature type="active site" description="Proton acceptor" evidence="1">
    <location>
        <position position="174"/>
    </location>
</feature>
<feature type="active site" description="Proton acceptor" evidence="1">
    <location>
        <position position="293"/>
    </location>
</feature>
<feature type="binding site" description="in homodimeric partner" evidence="1">
    <location>
        <position position="122"/>
    </location>
    <ligand>
        <name>substrate</name>
    </ligand>
</feature>
<feature type="binding site" evidence="1">
    <location>
        <position position="172"/>
    </location>
    <ligand>
        <name>substrate</name>
    </ligand>
</feature>
<feature type="binding site" evidence="1">
    <location>
        <position position="176"/>
    </location>
    <ligand>
        <name>substrate</name>
    </ligand>
</feature>
<feature type="binding site" description="via carbamate group" evidence="1">
    <location>
        <position position="200"/>
    </location>
    <ligand>
        <name>Mg(2+)</name>
        <dbReference type="ChEBI" id="CHEBI:18420"/>
    </ligand>
</feature>
<feature type="binding site" evidence="1">
    <location>
        <position position="202"/>
    </location>
    <ligand>
        <name>Mg(2+)</name>
        <dbReference type="ChEBI" id="CHEBI:18420"/>
    </ligand>
</feature>
<feature type="binding site" evidence="1">
    <location>
        <position position="203"/>
    </location>
    <ligand>
        <name>Mg(2+)</name>
        <dbReference type="ChEBI" id="CHEBI:18420"/>
    </ligand>
</feature>
<feature type="binding site" evidence="1">
    <location>
        <position position="294"/>
    </location>
    <ligand>
        <name>substrate</name>
    </ligand>
</feature>
<feature type="binding site" evidence="1">
    <location>
        <position position="326"/>
    </location>
    <ligand>
        <name>substrate</name>
    </ligand>
</feature>
<feature type="binding site" evidence="1">
    <location>
        <position position="378"/>
    </location>
    <ligand>
        <name>substrate</name>
    </ligand>
</feature>
<feature type="site" description="Transition state stabilizer" evidence="1">
    <location>
        <position position="333"/>
    </location>
</feature>
<feature type="modified residue" description="N6,N6,N6-trimethyllysine" evidence="1">
    <location>
        <position position="13"/>
    </location>
</feature>
<feature type="modified residue" description="N6-carboxylysine" evidence="1">
    <location>
        <position position="200"/>
    </location>
</feature>
<feature type="disulfide bond" description="Interchain; in linked form" evidence="1">
    <location>
        <position position="246"/>
    </location>
</feature>
<feature type="non-terminal residue">
    <location>
        <position position="1"/>
    </location>
</feature>
<sequence length="474" mass="52452">SPQXETKASVGFKAGVKDYKLTYYTPDYKTKDTDILAAFRVTPQPGVPPEEAGAAVAAESSTGTWTTVWTDGLTSLDRYKGRCYHIEPVAGEENHFIAYVAYPLDLFEEGSVTNMFTSIVGNVFGFKALRALRLEDLRIPPAYSKTFQGPPHGIQVERDKLNKYGRPLLGCTIKPKLGLSAKNYGRAVYECLRGGLDFTKDDENVNSQPFMRWRDRFVFCAEAIYKAQAETGEIKGHYLNATAGTCEEMIKRAVFARELGVPIIMHDYLTGGFTANTSLAHYCRDNGLLLHIHRAMHAVIDRQKNHGIHFRVLAKALRMSGGDHIHSGTVVGKLEGERDITLGFVDLLRDDFIAKDRSRGIYFTQDWVSLPGVLPVASGGIHVWHMPALTEIFGDDSVLQFGGGTLGHPWGNAPGAVANRVALEACVQARNEGRDLAREGNEIIREASKWSPELAAACEVWKEIKFEFQAVDTL</sequence>
<name>RBL_DENCL</name>
<organism>
    <name type="scientific">Dendrophthora clavata</name>
    <name type="common">Columbian mistletoe</name>
    <dbReference type="NCBI Taxonomy" id="3965"/>
    <lineage>
        <taxon>Eukaryota</taxon>
        <taxon>Viridiplantae</taxon>
        <taxon>Streptophyta</taxon>
        <taxon>Embryophyta</taxon>
        <taxon>Tracheophyta</taxon>
        <taxon>Spermatophyta</taxon>
        <taxon>Magnoliopsida</taxon>
        <taxon>eudicotyledons</taxon>
        <taxon>Gunneridae</taxon>
        <taxon>Pentapetalae</taxon>
        <taxon>Santalales</taxon>
        <taxon>Viscaceae</taxon>
        <taxon>Dendrophthora</taxon>
    </lineage>
</organism>
<proteinExistence type="inferred from homology"/>
<accession>P48699</accession>
<protein>
    <recommendedName>
        <fullName evidence="1">Ribulose bisphosphate carboxylase large chain</fullName>
        <shortName evidence="1">RuBisCO large subunit</shortName>
        <ecNumber evidence="1">4.1.1.39</ecNumber>
    </recommendedName>
</protein>
<dbReference type="EC" id="4.1.1.39" evidence="1"/>
<dbReference type="EMBL" id="L26069">
    <property type="protein sequence ID" value="AAB97296.1"/>
    <property type="molecule type" value="Genomic_DNA"/>
</dbReference>
<dbReference type="GO" id="GO:0009507">
    <property type="term" value="C:chloroplast"/>
    <property type="evidence" value="ECO:0007669"/>
    <property type="project" value="UniProtKB-SubCell"/>
</dbReference>
<dbReference type="GO" id="GO:0000287">
    <property type="term" value="F:magnesium ion binding"/>
    <property type="evidence" value="ECO:0007669"/>
    <property type="project" value="InterPro"/>
</dbReference>
<dbReference type="GO" id="GO:0004497">
    <property type="term" value="F:monooxygenase activity"/>
    <property type="evidence" value="ECO:0007669"/>
    <property type="project" value="UniProtKB-KW"/>
</dbReference>
<dbReference type="GO" id="GO:0016984">
    <property type="term" value="F:ribulose-bisphosphate carboxylase activity"/>
    <property type="evidence" value="ECO:0007669"/>
    <property type="project" value="UniProtKB-EC"/>
</dbReference>
<dbReference type="GO" id="GO:0009853">
    <property type="term" value="P:photorespiration"/>
    <property type="evidence" value="ECO:0007669"/>
    <property type="project" value="UniProtKB-KW"/>
</dbReference>
<dbReference type="GO" id="GO:0019253">
    <property type="term" value="P:reductive pentose-phosphate cycle"/>
    <property type="evidence" value="ECO:0007669"/>
    <property type="project" value="UniProtKB-KW"/>
</dbReference>
<dbReference type="CDD" id="cd08212">
    <property type="entry name" value="RuBisCO_large_I"/>
    <property type="match status" value="1"/>
</dbReference>
<dbReference type="FunFam" id="3.20.20.110:FF:000001">
    <property type="entry name" value="Ribulose bisphosphate carboxylase large chain"/>
    <property type="match status" value="1"/>
</dbReference>
<dbReference type="FunFam" id="3.30.70.150:FF:000001">
    <property type="entry name" value="Ribulose bisphosphate carboxylase large chain"/>
    <property type="match status" value="1"/>
</dbReference>
<dbReference type="Gene3D" id="3.20.20.110">
    <property type="entry name" value="Ribulose bisphosphate carboxylase, large subunit, C-terminal domain"/>
    <property type="match status" value="1"/>
</dbReference>
<dbReference type="Gene3D" id="3.30.70.150">
    <property type="entry name" value="RuBisCO large subunit, N-terminal domain"/>
    <property type="match status" value="1"/>
</dbReference>
<dbReference type="HAMAP" id="MF_01338">
    <property type="entry name" value="RuBisCO_L_type1"/>
    <property type="match status" value="1"/>
</dbReference>
<dbReference type="InterPro" id="IPR033966">
    <property type="entry name" value="RuBisCO"/>
</dbReference>
<dbReference type="InterPro" id="IPR020878">
    <property type="entry name" value="RuBisCo_large_chain_AS"/>
</dbReference>
<dbReference type="InterPro" id="IPR000685">
    <property type="entry name" value="RuBisCO_lsu_C"/>
</dbReference>
<dbReference type="InterPro" id="IPR036376">
    <property type="entry name" value="RuBisCO_lsu_C_sf"/>
</dbReference>
<dbReference type="InterPro" id="IPR017443">
    <property type="entry name" value="RuBisCO_lsu_fd_N"/>
</dbReference>
<dbReference type="InterPro" id="IPR036422">
    <property type="entry name" value="RuBisCO_lsu_N_sf"/>
</dbReference>
<dbReference type="InterPro" id="IPR020888">
    <property type="entry name" value="RuBisCO_lsuI"/>
</dbReference>
<dbReference type="NCBIfam" id="NF003252">
    <property type="entry name" value="PRK04208.1"/>
    <property type="match status" value="1"/>
</dbReference>
<dbReference type="PANTHER" id="PTHR42704">
    <property type="entry name" value="RIBULOSE BISPHOSPHATE CARBOXYLASE"/>
    <property type="match status" value="1"/>
</dbReference>
<dbReference type="PANTHER" id="PTHR42704:SF15">
    <property type="entry name" value="RIBULOSE BISPHOSPHATE CARBOXYLASE LARGE CHAIN"/>
    <property type="match status" value="1"/>
</dbReference>
<dbReference type="Pfam" id="PF00016">
    <property type="entry name" value="RuBisCO_large"/>
    <property type="match status" value="1"/>
</dbReference>
<dbReference type="Pfam" id="PF02788">
    <property type="entry name" value="RuBisCO_large_N"/>
    <property type="match status" value="1"/>
</dbReference>
<dbReference type="SFLD" id="SFLDG01052">
    <property type="entry name" value="RuBisCO"/>
    <property type="match status" value="1"/>
</dbReference>
<dbReference type="SFLD" id="SFLDS00014">
    <property type="entry name" value="RuBisCO"/>
    <property type="match status" value="1"/>
</dbReference>
<dbReference type="SFLD" id="SFLDG00301">
    <property type="entry name" value="RuBisCO-like_proteins"/>
    <property type="match status" value="1"/>
</dbReference>
<dbReference type="SUPFAM" id="SSF51649">
    <property type="entry name" value="RuBisCo, C-terminal domain"/>
    <property type="match status" value="1"/>
</dbReference>
<dbReference type="SUPFAM" id="SSF54966">
    <property type="entry name" value="RuBisCO, large subunit, small (N-terminal) domain"/>
    <property type="match status" value="1"/>
</dbReference>
<dbReference type="PROSITE" id="PS00157">
    <property type="entry name" value="RUBISCO_LARGE"/>
    <property type="match status" value="1"/>
</dbReference>
<gene>
    <name evidence="1" type="primary">rbcL</name>
</gene>